<protein>
    <recommendedName>
        <fullName>Protein YdhQ</fullName>
    </recommendedName>
</protein>
<name>YDHQ_ECOLI</name>
<reference key="1">
    <citation type="journal article" date="1997" name="J. Bacteriol.">
        <title>Analysis of the boundaries of Salmonella pathogenicity island 2 and the corresponding chromosomal region of Escherichia coli K-12.</title>
        <authorList>
            <person name="Hensel M."/>
            <person name="Shea J.E."/>
            <person name="Baeumler A.J."/>
            <person name="Gleeson C."/>
            <person name="Blattner F.R."/>
            <person name="Holden D.W."/>
        </authorList>
    </citation>
    <scope>NUCLEOTIDE SEQUENCE [GENOMIC DNA]</scope>
    <source>
        <strain>K12 / MG1655 / ATCC 47076</strain>
    </source>
</reference>
<reference key="2">
    <citation type="journal article" date="1996" name="DNA Res.">
        <title>A 570-kb DNA sequence of the Escherichia coli K-12 genome corresponding to the 28.0-40.1 min region on the linkage map.</title>
        <authorList>
            <person name="Aiba H."/>
            <person name="Baba T."/>
            <person name="Fujita K."/>
            <person name="Hayashi K."/>
            <person name="Inada T."/>
            <person name="Isono K."/>
            <person name="Itoh T."/>
            <person name="Kasai H."/>
            <person name="Kashimoto K."/>
            <person name="Kimura S."/>
            <person name="Kitakawa M."/>
            <person name="Kitagawa M."/>
            <person name="Makino K."/>
            <person name="Miki T."/>
            <person name="Mizobuchi K."/>
            <person name="Mori H."/>
            <person name="Mori T."/>
            <person name="Motomura K."/>
            <person name="Nakade S."/>
            <person name="Nakamura Y."/>
            <person name="Nashimoto H."/>
            <person name="Nishio Y."/>
            <person name="Oshima T."/>
            <person name="Saito N."/>
            <person name="Sampei G."/>
            <person name="Seki Y."/>
            <person name="Sivasundaram S."/>
            <person name="Tagami H."/>
            <person name="Takeda J."/>
            <person name="Takemoto K."/>
            <person name="Takeuchi Y."/>
            <person name="Wada C."/>
            <person name="Yamamoto Y."/>
            <person name="Horiuchi T."/>
        </authorList>
    </citation>
    <scope>NUCLEOTIDE SEQUENCE [LARGE SCALE GENOMIC DNA]</scope>
    <source>
        <strain>K12 / W3110 / ATCC 27325 / DSM 5911</strain>
    </source>
</reference>
<reference key="3">
    <citation type="journal article" date="1997" name="Science">
        <title>The complete genome sequence of Escherichia coli K-12.</title>
        <authorList>
            <person name="Blattner F.R."/>
            <person name="Plunkett G. III"/>
            <person name="Bloch C.A."/>
            <person name="Perna N.T."/>
            <person name="Burland V."/>
            <person name="Riley M."/>
            <person name="Collado-Vides J."/>
            <person name="Glasner J.D."/>
            <person name="Rode C.K."/>
            <person name="Mayhew G.F."/>
            <person name="Gregor J."/>
            <person name="Davis N.W."/>
            <person name="Kirkpatrick H.A."/>
            <person name="Goeden M.A."/>
            <person name="Rose D.J."/>
            <person name="Mau B."/>
            <person name="Shao Y."/>
        </authorList>
    </citation>
    <scope>NUCLEOTIDE SEQUENCE [LARGE SCALE GENOMIC DNA]</scope>
    <source>
        <strain>K12 / MG1655 / ATCC 47076</strain>
    </source>
</reference>
<reference key="4">
    <citation type="journal article" date="2006" name="Mol. Syst. Biol.">
        <title>Highly accurate genome sequences of Escherichia coli K-12 strains MG1655 and W3110.</title>
        <authorList>
            <person name="Hayashi K."/>
            <person name="Morooka N."/>
            <person name="Yamamoto Y."/>
            <person name="Fujita K."/>
            <person name="Isono K."/>
            <person name="Choi S."/>
            <person name="Ohtsubo E."/>
            <person name="Baba T."/>
            <person name="Wanner B.L."/>
            <person name="Mori H."/>
            <person name="Horiuchi T."/>
        </authorList>
    </citation>
    <scope>NUCLEOTIDE SEQUENCE [LARGE SCALE GENOMIC DNA]</scope>
    <source>
        <strain>K12 / W3110 / ATCC 27325 / DSM 5911</strain>
    </source>
</reference>
<reference key="5">
    <citation type="journal article" date="2005" name="J. Bacteriol.">
        <title>Combined inactivation and expression strategy to study gene function under physiological conditions: application to identification of new Escherichia coli adhesins.</title>
        <authorList>
            <person name="Roux A."/>
            <person name="Beloin C."/>
            <person name="Ghigo J.M."/>
        </authorList>
    </citation>
    <scope>DISRUPTION PHENOTYPE</scope>
    <source>
        <strain>K12 / MG1655 / ATCC 47076</strain>
    </source>
</reference>
<reference key="6">
    <citation type="journal article" date="2015" name="Bioinformatics">
        <title>Novel function discovery with GeneMANIA: a new integrated resource for gene function prediction in Escherichia coli.</title>
        <authorList>
            <person name="Vlasblom J."/>
            <person name="Zuberi K."/>
            <person name="Rodriguez H."/>
            <person name="Arnold R."/>
            <person name="Gagarinova A."/>
            <person name="Deineko V."/>
            <person name="Kumar A."/>
            <person name="Leung E."/>
            <person name="Rizzolo K."/>
            <person name="Samanfar B."/>
            <person name="Chang L."/>
            <person name="Phanse S."/>
            <person name="Golshani A."/>
            <person name="Greenblatt J.F."/>
            <person name="Houry W.A."/>
            <person name="Emili A."/>
            <person name="Morris Q."/>
            <person name="Bader G."/>
            <person name="Babu M."/>
        </authorList>
    </citation>
    <scope>DISRUPTION PHENOTYPE</scope>
    <source>
        <strain>K12 / BW25113</strain>
    </source>
</reference>
<feature type="chain" id="PRO_0000201324" description="Protein YdhQ">
    <location>
        <begin position="1"/>
        <end position="418"/>
    </location>
</feature>
<organism>
    <name type="scientific">Escherichia coli (strain K12)</name>
    <dbReference type="NCBI Taxonomy" id="83333"/>
    <lineage>
        <taxon>Bacteria</taxon>
        <taxon>Pseudomonadati</taxon>
        <taxon>Pseudomonadota</taxon>
        <taxon>Gammaproteobacteria</taxon>
        <taxon>Enterobacterales</taxon>
        <taxon>Enterobacteriaceae</taxon>
        <taxon>Escherichia</taxon>
    </lineage>
</organism>
<keyword id="KW-1185">Reference proteome</keyword>
<sequence length="418" mass="42876">MGSDAKNLMSDGNVQIVKTGEVIGATQLTEGELIVEAGGRAENTVVTGAGWLKVATGGIAKCTQYGNNGTLSVSDGAIATDIVQSEGGAISLSTLATVNGRHPEGEFSVDKGYACGLLLENGGNLRVLEGHRAEKIILDQEGGLLVNGTTSAVVVDEGGELLVYPGGEASNCEINQGGVFMLAGKASDTLLAGGTMNNLGGEDSDTIVENGSIYRLGTDGLQLYSSGKTQNLSVNVGGRAEVHAGTLENAVIQGGTVILLSPTSADENFVVEEDRAPVELTGSVALLDGASMIIGYGAELQQSTITVQQGGVLILDGSTVKGDSVTFIVGNINLNGGKLWLITDAATHVQLKVKRLRGEGAICLQTSAKEISPDFINVKGEVTGDIHVEITDASRQTLCNALKLQPDEDGIGATLQPA</sequence>
<dbReference type="EMBL" id="U68703">
    <property type="protein sequence ID" value="AAB47942.1"/>
    <property type="molecule type" value="Genomic_DNA"/>
</dbReference>
<dbReference type="EMBL" id="U00096">
    <property type="protein sequence ID" value="AAC74736.1"/>
    <property type="molecule type" value="Genomic_DNA"/>
</dbReference>
<dbReference type="EMBL" id="AP009048">
    <property type="protein sequence ID" value="BAA15431.1"/>
    <property type="molecule type" value="Genomic_DNA"/>
</dbReference>
<dbReference type="PIR" id="B64924">
    <property type="entry name" value="B64924"/>
</dbReference>
<dbReference type="RefSeq" id="NP_416181.1">
    <property type="nucleotide sequence ID" value="NC_000913.3"/>
</dbReference>
<dbReference type="RefSeq" id="WP_000534271.1">
    <property type="nucleotide sequence ID" value="NZ_SSZK01000001.1"/>
</dbReference>
<dbReference type="SMR" id="P77552"/>
<dbReference type="BioGRID" id="4260272">
    <property type="interactions" value="15"/>
</dbReference>
<dbReference type="DIP" id="DIP-28088N"/>
<dbReference type="FunCoup" id="P77552">
    <property type="interactions" value="39"/>
</dbReference>
<dbReference type="IntAct" id="P77552">
    <property type="interactions" value="16"/>
</dbReference>
<dbReference type="STRING" id="511145.b1664"/>
<dbReference type="jPOST" id="P77552"/>
<dbReference type="PaxDb" id="511145-b1664"/>
<dbReference type="EnsemblBacteria" id="AAC74736">
    <property type="protein sequence ID" value="AAC74736"/>
    <property type="gene ID" value="b1664"/>
</dbReference>
<dbReference type="GeneID" id="944851"/>
<dbReference type="KEGG" id="ecj:JW1656"/>
<dbReference type="KEGG" id="eco:b1664"/>
<dbReference type="KEGG" id="ecoc:C3026_09545"/>
<dbReference type="PATRIC" id="fig|511145.12.peg.1737"/>
<dbReference type="EchoBASE" id="EB3709"/>
<dbReference type="eggNOG" id="COG3468">
    <property type="taxonomic scope" value="Bacteria"/>
</dbReference>
<dbReference type="HOGENOM" id="CLU_656797_0_0_6"/>
<dbReference type="InParanoid" id="P77552"/>
<dbReference type="OMA" id="ACNCEIN"/>
<dbReference type="OrthoDB" id="6572645at2"/>
<dbReference type="PhylomeDB" id="P77552"/>
<dbReference type="BioCyc" id="EcoCyc:G6894-MONOMER"/>
<dbReference type="PRO" id="PR:P77552"/>
<dbReference type="Proteomes" id="UP000000625">
    <property type="component" value="Chromosome"/>
</dbReference>
<dbReference type="GO" id="GO:0006974">
    <property type="term" value="P:DNA damage response"/>
    <property type="evidence" value="ECO:0000270"/>
    <property type="project" value="EcoliWiki"/>
</dbReference>
<dbReference type="FunFam" id="2.160.20.20:FF:000001">
    <property type="entry name" value="Possible enzyme"/>
    <property type="match status" value="1"/>
</dbReference>
<dbReference type="FunFam" id="2.160.20.20:FF:000003">
    <property type="entry name" value="Possible enzyme"/>
    <property type="match status" value="1"/>
</dbReference>
<dbReference type="Gene3D" id="2.160.20.20">
    <property type="match status" value="2"/>
</dbReference>
<dbReference type="InterPro" id="IPR030930">
    <property type="entry name" value="AIDA"/>
</dbReference>
<dbReference type="InterPro" id="IPR012332">
    <property type="entry name" value="Autotransporter_pectin_lyase_C"/>
</dbReference>
<dbReference type="InterPro" id="IPR011050">
    <property type="entry name" value="Pectin_lyase_fold/virulence"/>
</dbReference>
<dbReference type="InterPro" id="IPR004899">
    <property type="entry name" value="Pertactin_central"/>
</dbReference>
<dbReference type="NCBIfam" id="TIGR04415">
    <property type="entry name" value="O_hepto_targRPT"/>
    <property type="match status" value="1"/>
</dbReference>
<dbReference type="NCBIfam" id="NF007409">
    <property type="entry name" value="PRK09945.1"/>
    <property type="match status" value="1"/>
</dbReference>
<dbReference type="Pfam" id="PF16168">
    <property type="entry name" value="AIDA"/>
    <property type="match status" value="1"/>
</dbReference>
<dbReference type="Pfam" id="PF03212">
    <property type="entry name" value="Pertactin"/>
    <property type="match status" value="1"/>
</dbReference>
<dbReference type="SUPFAM" id="SSF51126">
    <property type="entry name" value="Pectin lyase-like"/>
    <property type="match status" value="1"/>
</dbReference>
<proteinExistence type="predicted"/>
<comment type="disruption phenotype">
    <text evidence="1 2">No change in cell adhesion or biofilm formation (PubMed:15659678). Increased biofilm formation (PubMed:25316676).</text>
</comment>
<gene>
    <name type="primary">ydhQ</name>
    <name type="ordered locus">b1664</name>
    <name type="ordered locus">JW1656</name>
</gene>
<evidence type="ECO:0000269" key="1">
    <source>
    </source>
</evidence>
<evidence type="ECO:0000269" key="2">
    <source>
    </source>
</evidence>
<accession>P77552</accession>